<dbReference type="EC" id="7.1.1.2"/>
<dbReference type="EMBL" id="AY960980">
    <property type="protein sequence ID" value="AAX50177.1"/>
    <property type="molecule type" value="Genomic_DNA"/>
</dbReference>
<dbReference type="RefSeq" id="YP_220688.1">
    <property type="nucleotide sequence ID" value="NC_006924.1"/>
</dbReference>
<dbReference type="SMR" id="Q58F73"/>
<dbReference type="GeneID" id="3338929"/>
<dbReference type="CTD" id="4539"/>
<dbReference type="OrthoDB" id="6146597at2759"/>
<dbReference type="GO" id="GO:0005743">
    <property type="term" value="C:mitochondrial inner membrane"/>
    <property type="evidence" value="ECO:0000250"/>
    <property type="project" value="UniProtKB"/>
</dbReference>
<dbReference type="GO" id="GO:0045271">
    <property type="term" value="C:respiratory chain complex I"/>
    <property type="evidence" value="ECO:0000250"/>
    <property type="project" value="UniProtKB"/>
</dbReference>
<dbReference type="GO" id="GO:0008137">
    <property type="term" value="F:NADH dehydrogenase (ubiquinone) activity"/>
    <property type="evidence" value="ECO:0000250"/>
    <property type="project" value="UniProtKB"/>
</dbReference>
<dbReference type="GO" id="GO:0042773">
    <property type="term" value="P:ATP synthesis coupled electron transport"/>
    <property type="evidence" value="ECO:0007669"/>
    <property type="project" value="InterPro"/>
</dbReference>
<dbReference type="FunFam" id="1.10.287.3510:FF:000002">
    <property type="entry name" value="NADH-ubiquinone oxidoreductase chain 4L"/>
    <property type="match status" value="1"/>
</dbReference>
<dbReference type="Gene3D" id="1.10.287.3510">
    <property type="match status" value="1"/>
</dbReference>
<dbReference type="InterPro" id="IPR001133">
    <property type="entry name" value="NADH_UbQ_OxRdtase_chain4L/K"/>
</dbReference>
<dbReference type="InterPro" id="IPR039428">
    <property type="entry name" value="NUOK/Mnh_C1-like"/>
</dbReference>
<dbReference type="PANTHER" id="PTHR11434:SF0">
    <property type="entry name" value="NADH-UBIQUINONE OXIDOREDUCTASE CHAIN 4L"/>
    <property type="match status" value="1"/>
</dbReference>
<dbReference type="PANTHER" id="PTHR11434">
    <property type="entry name" value="NADH-UBIQUINONE OXIDOREDUCTASE SUBUNIT ND4L"/>
    <property type="match status" value="1"/>
</dbReference>
<dbReference type="Pfam" id="PF00420">
    <property type="entry name" value="Oxidored_q2"/>
    <property type="match status" value="1"/>
</dbReference>
<name>NU4LM_CHODI</name>
<feature type="chain" id="PRO_0000274997" description="NADH-ubiquinone oxidoreductase chain 4L">
    <location>
        <begin position="1"/>
        <end position="98"/>
    </location>
</feature>
<feature type="transmembrane region" description="Helical" evidence="3">
    <location>
        <begin position="1"/>
        <end position="21"/>
    </location>
</feature>
<feature type="transmembrane region" description="Helical" evidence="3">
    <location>
        <begin position="29"/>
        <end position="49"/>
    </location>
</feature>
<feature type="transmembrane region" description="Helical" evidence="3">
    <location>
        <begin position="61"/>
        <end position="81"/>
    </location>
</feature>
<comment type="function">
    <text evidence="1">Core subunit of the mitochondrial membrane respiratory chain NADH dehydrogenase (Complex I) which catalyzes electron transfer from NADH through the respiratory chain, using ubiquinone as an electron acceptor. Part of the enzyme membrane arm which is embedded in the lipid bilayer and involved in proton translocation.</text>
</comment>
<comment type="catalytic activity">
    <reaction evidence="1">
        <text>a ubiquinone + NADH + 5 H(+)(in) = a ubiquinol + NAD(+) + 4 H(+)(out)</text>
        <dbReference type="Rhea" id="RHEA:29091"/>
        <dbReference type="Rhea" id="RHEA-COMP:9565"/>
        <dbReference type="Rhea" id="RHEA-COMP:9566"/>
        <dbReference type="ChEBI" id="CHEBI:15378"/>
        <dbReference type="ChEBI" id="CHEBI:16389"/>
        <dbReference type="ChEBI" id="CHEBI:17976"/>
        <dbReference type="ChEBI" id="CHEBI:57540"/>
        <dbReference type="ChEBI" id="CHEBI:57945"/>
        <dbReference type="EC" id="7.1.1.2"/>
    </reaction>
    <physiologicalReaction direction="left-to-right" evidence="1">
        <dbReference type="Rhea" id="RHEA:29092"/>
    </physiologicalReaction>
</comment>
<comment type="subunit">
    <text evidence="2">Core subunit of respiratory chain NADH dehydrogenase (Complex I) which is composed of 45 different subunits.</text>
</comment>
<comment type="subcellular location">
    <subcellularLocation>
        <location evidence="2">Mitochondrion inner membrane</location>
        <topology evidence="3">Multi-pass membrane protein</topology>
    </subcellularLocation>
</comment>
<comment type="similarity">
    <text evidence="4">Belongs to the complex I subunit 4L family.</text>
</comment>
<sequence>MPSTYINILLAFTMALLGLLLYRSHMMSSLLCLEGLMLALFILSTLMALNTHHTLSAVLPIVLMVFAACEAALGLALLVMVSNTYGLDYVQNLNLLQC</sequence>
<geneLocation type="mitochondrion"/>
<accession>Q58F73</accession>
<keyword id="KW-0249">Electron transport</keyword>
<keyword id="KW-0472">Membrane</keyword>
<keyword id="KW-0496">Mitochondrion</keyword>
<keyword id="KW-0999">Mitochondrion inner membrane</keyword>
<keyword id="KW-0520">NAD</keyword>
<keyword id="KW-0679">Respiratory chain</keyword>
<keyword id="KW-1278">Translocase</keyword>
<keyword id="KW-0812">Transmembrane</keyword>
<keyword id="KW-1133">Transmembrane helix</keyword>
<keyword id="KW-0813">Transport</keyword>
<keyword id="KW-0830">Ubiquinone</keyword>
<protein>
    <recommendedName>
        <fullName>NADH-ubiquinone oxidoreductase chain 4L</fullName>
        <ecNumber>7.1.1.2</ecNumber>
    </recommendedName>
    <alternativeName>
        <fullName>NADH dehydrogenase subunit 4L</fullName>
    </alternativeName>
</protein>
<proteinExistence type="inferred from homology"/>
<evidence type="ECO:0000250" key="1">
    <source>
        <dbReference type="UniProtKB" id="P03901"/>
    </source>
</evidence>
<evidence type="ECO:0000250" key="2">
    <source>
        <dbReference type="UniProtKB" id="P03902"/>
    </source>
</evidence>
<evidence type="ECO:0000255" key="3"/>
<evidence type="ECO:0000305" key="4"/>
<gene>
    <name type="primary">MT-ND4L</name>
    <name type="synonym">MTND4L</name>
    <name type="synonym">NADH4L</name>
    <name type="synonym">ND4L</name>
</gene>
<reference key="1">
    <citation type="submission" date="2005-03" db="EMBL/GenBank/DDBJ databases">
        <authorList>
            <person name="McLenachan P."/>
            <person name="Penny D."/>
        </authorList>
    </citation>
    <scope>NUCLEOTIDE SEQUENCE [GENOMIC DNA]</scope>
</reference>
<organism>
    <name type="scientific">Choloepus didactylus</name>
    <name type="common">Southern two-toed sloth</name>
    <name type="synonym">Bradypus didactylus</name>
    <dbReference type="NCBI Taxonomy" id="27675"/>
    <lineage>
        <taxon>Eukaryota</taxon>
        <taxon>Metazoa</taxon>
        <taxon>Chordata</taxon>
        <taxon>Craniata</taxon>
        <taxon>Vertebrata</taxon>
        <taxon>Euteleostomi</taxon>
        <taxon>Mammalia</taxon>
        <taxon>Eutheria</taxon>
        <taxon>Xenarthra</taxon>
        <taxon>Pilosa</taxon>
        <taxon>Folivora</taxon>
        <taxon>Megalonychidae</taxon>
        <taxon>Choloepus</taxon>
    </lineage>
</organism>